<dbReference type="EMBL" id="CP001252">
    <property type="protein sequence ID" value="ACK44578.1"/>
    <property type="molecule type" value="Genomic_DNA"/>
</dbReference>
<dbReference type="RefSeq" id="WP_006083793.1">
    <property type="nucleotide sequence ID" value="NC_011663.1"/>
</dbReference>
<dbReference type="SMR" id="B8E3K4"/>
<dbReference type="KEGG" id="sbp:Sbal223_0034"/>
<dbReference type="HOGENOM" id="CLU_133242_0_0_6"/>
<dbReference type="Proteomes" id="UP000002507">
    <property type="component" value="Chromosome"/>
</dbReference>
<dbReference type="HAMAP" id="MF_00598">
    <property type="entry name" value="Smg"/>
    <property type="match status" value="1"/>
</dbReference>
<dbReference type="InterPro" id="IPR007456">
    <property type="entry name" value="Smg"/>
</dbReference>
<dbReference type="NCBIfam" id="NF002897">
    <property type="entry name" value="PRK03430.1"/>
    <property type="match status" value="1"/>
</dbReference>
<dbReference type="PANTHER" id="PTHR38692">
    <property type="entry name" value="PROTEIN SMG"/>
    <property type="match status" value="1"/>
</dbReference>
<dbReference type="PANTHER" id="PTHR38692:SF1">
    <property type="entry name" value="PROTEIN SMG"/>
    <property type="match status" value="1"/>
</dbReference>
<dbReference type="Pfam" id="PF04361">
    <property type="entry name" value="DUF494"/>
    <property type="match status" value="1"/>
</dbReference>
<comment type="similarity">
    <text evidence="1">Belongs to the Smg family.</text>
</comment>
<name>SMG_SHEB2</name>
<reference key="1">
    <citation type="submission" date="2008-12" db="EMBL/GenBank/DDBJ databases">
        <title>Complete sequence of chromosome of Shewanella baltica OS223.</title>
        <authorList>
            <consortium name="US DOE Joint Genome Institute"/>
            <person name="Lucas S."/>
            <person name="Copeland A."/>
            <person name="Lapidus A."/>
            <person name="Glavina del Rio T."/>
            <person name="Dalin E."/>
            <person name="Tice H."/>
            <person name="Bruce D."/>
            <person name="Goodwin L."/>
            <person name="Pitluck S."/>
            <person name="Chertkov O."/>
            <person name="Meincke L."/>
            <person name="Brettin T."/>
            <person name="Detter J.C."/>
            <person name="Han C."/>
            <person name="Kuske C.R."/>
            <person name="Larimer F."/>
            <person name="Land M."/>
            <person name="Hauser L."/>
            <person name="Kyrpides N."/>
            <person name="Ovchinnikova G."/>
            <person name="Brettar I."/>
            <person name="Rodrigues J."/>
            <person name="Konstantinidis K."/>
            <person name="Tiedje J."/>
        </authorList>
    </citation>
    <scope>NUCLEOTIDE SEQUENCE [LARGE SCALE GENOMIC DNA]</scope>
    <source>
        <strain>OS223</strain>
    </source>
</reference>
<proteinExistence type="inferred from homology"/>
<gene>
    <name evidence="1" type="primary">smg</name>
    <name type="ordered locus">Sbal223_0034</name>
</gene>
<evidence type="ECO:0000255" key="1">
    <source>
        <dbReference type="HAMAP-Rule" id="MF_00598"/>
    </source>
</evidence>
<protein>
    <recommendedName>
        <fullName evidence="1">Protein Smg homolog</fullName>
    </recommendedName>
</protein>
<feature type="chain" id="PRO_1000146998" description="Protein Smg homolog">
    <location>
        <begin position="1"/>
        <end position="157"/>
    </location>
</feature>
<accession>B8E3K4</accession>
<sequence length="157" mass="18664">MFDILMYLFENYVHSEVELLVDEDELTKELTRAGFHQSEILKALTWLERLAELQEGDKPYLCNHDQHSFRIYTKDEMDKLDVESRGFLLFLEQVKVLNVETREMVIDRVMELDEPTLILEDLKWVILMVLFNAPGHESAYEQMEDLIFEQPEGRLHS</sequence>
<organism>
    <name type="scientific">Shewanella baltica (strain OS223)</name>
    <dbReference type="NCBI Taxonomy" id="407976"/>
    <lineage>
        <taxon>Bacteria</taxon>
        <taxon>Pseudomonadati</taxon>
        <taxon>Pseudomonadota</taxon>
        <taxon>Gammaproteobacteria</taxon>
        <taxon>Alteromonadales</taxon>
        <taxon>Shewanellaceae</taxon>
        <taxon>Shewanella</taxon>
    </lineage>
</organism>